<organism>
    <name type="scientific">Burkholderia thailandensis (strain ATCC 700388 / DSM 13276 / CCUG 48851 / CIP 106301 / E264)</name>
    <dbReference type="NCBI Taxonomy" id="271848"/>
    <lineage>
        <taxon>Bacteria</taxon>
        <taxon>Pseudomonadati</taxon>
        <taxon>Pseudomonadota</taxon>
        <taxon>Betaproteobacteria</taxon>
        <taxon>Burkholderiales</taxon>
        <taxon>Burkholderiaceae</taxon>
        <taxon>Burkholderia</taxon>
        <taxon>pseudomallei group</taxon>
    </lineage>
</organism>
<proteinExistence type="inferred from homology"/>
<gene>
    <name evidence="1" type="primary">atpC</name>
    <name type="ordered locus">BTH_I3307</name>
</gene>
<evidence type="ECO:0000255" key="1">
    <source>
        <dbReference type="HAMAP-Rule" id="MF_00530"/>
    </source>
</evidence>
<comment type="function">
    <text evidence="1">Produces ATP from ADP in the presence of a proton gradient across the membrane.</text>
</comment>
<comment type="subunit">
    <text>F-type ATPases have 2 components, CF(1) - the catalytic core - and CF(0) - the membrane proton channel. CF(1) has five subunits: alpha(3), beta(3), gamma(1), delta(1), epsilon(1). CF(0) has three main subunits: a, b and c.</text>
</comment>
<comment type="subcellular location">
    <subcellularLocation>
        <location evidence="1">Cell inner membrane</location>
        <topology evidence="1">Peripheral membrane protein</topology>
    </subcellularLocation>
</comment>
<comment type="similarity">
    <text evidence="1">Belongs to the ATPase epsilon chain family.</text>
</comment>
<name>ATPE_BURTA</name>
<feature type="chain" id="PRO_0000265795" description="ATP synthase epsilon chain">
    <location>
        <begin position="1"/>
        <end position="141"/>
    </location>
</feature>
<reference key="1">
    <citation type="journal article" date="2005" name="BMC Genomics">
        <title>Bacterial genome adaptation to niches: divergence of the potential virulence genes in three Burkholderia species of different survival strategies.</title>
        <authorList>
            <person name="Kim H.S."/>
            <person name="Schell M.A."/>
            <person name="Yu Y."/>
            <person name="Ulrich R.L."/>
            <person name="Sarria S.H."/>
            <person name="Nierman W.C."/>
            <person name="DeShazer D."/>
        </authorList>
    </citation>
    <scope>NUCLEOTIDE SEQUENCE [LARGE SCALE GENOMIC DNA]</scope>
    <source>
        <strain>ATCC 700388 / DSM 13276 / CCUG 48851 / CIP 106301 / E264</strain>
    </source>
</reference>
<sequence length="141" mass="14926">MATIKVDVVSAEEQIFSGLAKFVALPGEAGELGILPGHTPLITRIRPGAVRIEAESGDEEFVFVAGGILEVQPGAVTVLADTAIRGKDLDAAKAEEARKRAEETLQNAKSDIDLAKAQSELATAMAQLEAIQRLAKIRGRH</sequence>
<dbReference type="EMBL" id="CP000086">
    <property type="protein sequence ID" value="ABC36325.1"/>
    <property type="molecule type" value="Genomic_DNA"/>
</dbReference>
<dbReference type="RefSeq" id="WP_009906700.1">
    <property type="nucleotide sequence ID" value="NZ_CP008785.1"/>
</dbReference>
<dbReference type="SMR" id="Q2STF0"/>
<dbReference type="GeneID" id="45122976"/>
<dbReference type="KEGG" id="bte:BTH_I3307"/>
<dbReference type="HOGENOM" id="CLU_084338_2_0_4"/>
<dbReference type="Proteomes" id="UP000001930">
    <property type="component" value="Chromosome I"/>
</dbReference>
<dbReference type="GO" id="GO:0005886">
    <property type="term" value="C:plasma membrane"/>
    <property type="evidence" value="ECO:0007669"/>
    <property type="project" value="UniProtKB-SubCell"/>
</dbReference>
<dbReference type="GO" id="GO:0045259">
    <property type="term" value="C:proton-transporting ATP synthase complex"/>
    <property type="evidence" value="ECO:0007669"/>
    <property type="project" value="UniProtKB-KW"/>
</dbReference>
<dbReference type="GO" id="GO:0005524">
    <property type="term" value="F:ATP binding"/>
    <property type="evidence" value="ECO:0007669"/>
    <property type="project" value="UniProtKB-UniRule"/>
</dbReference>
<dbReference type="GO" id="GO:0046933">
    <property type="term" value="F:proton-transporting ATP synthase activity, rotational mechanism"/>
    <property type="evidence" value="ECO:0007669"/>
    <property type="project" value="UniProtKB-UniRule"/>
</dbReference>
<dbReference type="CDD" id="cd12152">
    <property type="entry name" value="F1-ATPase_delta"/>
    <property type="match status" value="1"/>
</dbReference>
<dbReference type="FunFam" id="2.60.15.10:FF:000001">
    <property type="entry name" value="ATP synthase epsilon chain"/>
    <property type="match status" value="1"/>
</dbReference>
<dbReference type="Gene3D" id="1.20.5.440">
    <property type="entry name" value="ATP synthase delta/epsilon subunit, C-terminal domain"/>
    <property type="match status" value="1"/>
</dbReference>
<dbReference type="Gene3D" id="2.60.15.10">
    <property type="entry name" value="F0F1 ATP synthase delta/epsilon subunit, N-terminal"/>
    <property type="match status" value="1"/>
</dbReference>
<dbReference type="HAMAP" id="MF_00530">
    <property type="entry name" value="ATP_synth_epsil_bac"/>
    <property type="match status" value="1"/>
</dbReference>
<dbReference type="InterPro" id="IPR036794">
    <property type="entry name" value="ATP_F1_dsu/esu_C_sf"/>
</dbReference>
<dbReference type="InterPro" id="IPR001469">
    <property type="entry name" value="ATP_synth_F1_dsu/esu"/>
</dbReference>
<dbReference type="InterPro" id="IPR020546">
    <property type="entry name" value="ATP_synth_F1_dsu/esu_N"/>
</dbReference>
<dbReference type="InterPro" id="IPR020547">
    <property type="entry name" value="ATP_synth_F1_esu_C"/>
</dbReference>
<dbReference type="InterPro" id="IPR036771">
    <property type="entry name" value="ATPsynth_dsu/esu_N"/>
</dbReference>
<dbReference type="NCBIfam" id="TIGR01216">
    <property type="entry name" value="ATP_synt_epsi"/>
    <property type="match status" value="1"/>
</dbReference>
<dbReference type="NCBIfam" id="NF001847">
    <property type="entry name" value="PRK00571.1-4"/>
    <property type="match status" value="1"/>
</dbReference>
<dbReference type="PANTHER" id="PTHR13822">
    <property type="entry name" value="ATP SYNTHASE DELTA/EPSILON CHAIN"/>
    <property type="match status" value="1"/>
</dbReference>
<dbReference type="PANTHER" id="PTHR13822:SF10">
    <property type="entry name" value="ATP SYNTHASE EPSILON CHAIN, CHLOROPLASTIC"/>
    <property type="match status" value="1"/>
</dbReference>
<dbReference type="Pfam" id="PF00401">
    <property type="entry name" value="ATP-synt_DE"/>
    <property type="match status" value="1"/>
</dbReference>
<dbReference type="Pfam" id="PF02823">
    <property type="entry name" value="ATP-synt_DE_N"/>
    <property type="match status" value="1"/>
</dbReference>
<dbReference type="SUPFAM" id="SSF46604">
    <property type="entry name" value="Epsilon subunit of F1F0-ATP synthase C-terminal domain"/>
    <property type="match status" value="1"/>
</dbReference>
<dbReference type="SUPFAM" id="SSF51344">
    <property type="entry name" value="Epsilon subunit of F1F0-ATP synthase N-terminal domain"/>
    <property type="match status" value="1"/>
</dbReference>
<accession>Q2STF0</accession>
<keyword id="KW-0066">ATP synthesis</keyword>
<keyword id="KW-0997">Cell inner membrane</keyword>
<keyword id="KW-1003">Cell membrane</keyword>
<keyword id="KW-0139">CF(1)</keyword>
<keyword id="KW-0375">Hydrogen ion transport</keyword>
<keyword id="KW-0406">Ion transport</keyword>
<keyword id="KW-0472">Membrane</keyword>
<keyword id="KW-0813">Transport</keyword>
<protein>
    <recommendedName>
        <fullName evidence="1">ATP synthase epsilon chain</fullName>
    </recommendedName>
    <alternativeName>
        <fullName evidence="1">ATP synthase F1 sector epsilon subunit</fullName>
    </alternativeName>
    <alternativeName>
        <fullName evidence="1">F-ATPase epsilon subunit</fullName>
    </alternativeName>
</protein>